<keyword id="KW-0002">3D-structure</keyword>
<keyword id="KW-0963">Cytoplasm</keyword>
<keyword id="KW-0413">Isomerase</keyword>
<keyword id="KW-0539">Nucleus</keyword>
<keyword id="KW-0597">Phosphoprotein</keyword>
<keyword id="KW-1185">Reference proteome</keyword>
<keyword id="KW-0697">Rotamase</keyword>
<sequence length="170" mass="19405">MPSDVASRTGLPTPWTVRYSKSKKREYFFNPETKHSQWEEPEGTNKDQLHKHLRDHPVRVRCLHILIKHKDSRRPASHRSENITISKQDATDELKTLITRLDDDSKTNSFEALAKERSDCSSYKRGGDLGWFGRGEMQPSFEDAAFQLKVGEVSDIVESGSGVHVIKRVG</sequence>
<reference key="1">
    <citation type="journal article" date="1989" name="Yeast">
        <title>Sequence and mutational analysis of ESS1, a gene essential for growth in Saccharomyces cerevisiae.</title>
        <authorList>
            <person name="Hanes S.D."/>
            <person name="Shank P.R."/>
            <person name="Bostian K.A."/>
        </authorList>
    </citation>
    <scope>NUCLEOTIDE SEQUENCE [GENOMIC DNA]</scope>
    <source>
        <strain>DBY864</strain>
    </source>
</reference>
<reference key="2">
    <citation type="journal article" date="1995" name="FEBS Lett.">
        <title>PTF1 encodes an essential protein in Saccharomyces cerevisiae, which shows strong homology with a new putative family of PPIases.</title>
        <authorList>
            <person name="Hani J."/>
            <person name="Stumpf G."/>
            <person name="Domdey H."/>
        </authorList>
    </citation>
    <scope>NUCLEOTIDE SEQUENCE [GENOMIC DNA]</scope>
    <source>
        <strain>DH484</strain>
    </source>
</reference>
<reference key="3">
    <citation type="journal article" date="1996" name="EMBO J.">
        <title>Complete nucleotide sequence of Saccharomyces cerevisiae chromosome X.</title>
        <authorList>
            <person name="Galibert F."/>
            <person name="Alexandraki D."/>
            <person name="Baur A."/>
            <person name="Boles E."/>
            <person name="Chalwatzis N."/>
            <person name="Chuat J.-C."/>
            <person name="Coster F."/>
            <person name="Cziepluch C."/>
            <person name="de Haan M."/>
            <person name="Domdey H."/>
            <person name="Durand P."/>
            <person name="Entian K.-D."/>
            <person name="Gatius M."/>
            <person name="Goffeau A."/>
            <person name="Grivell L.A."/>
            <person name="Hennemann A."/>
            <person name="Herbert C.J."/>
            <person name="Heumann K."/>
            <person name="Hilger F."/>
            <person name="Hollenberg C.P."/>
            <person name="Huang M.-E."/>
            <person name="Jacq C."/>
            <person name="Jauniaux J.-C."/>
            <person name="Katsoulou C."/>
            <person name="Kirchrath L."/>
            <person name="Kleine K."/>
            <person name="Kordes E."/>
            <person name="Koetter P."/>
            <person name="Liebl S."/>
            <person name="Louis E.J."/>
            <person name="Manus V."/>
            <person name="Mewes H.-W."/>
            <person name="Miosga T."/>
            <person name="Obermaier B."/>
            <person name="Perea J."/>
            <person name="Pohl T.M."/>
            <person name="Portetelle D."/>
            <person name="Pujol A."/>
            <person name="Purnelle B."/>
            <person name="Ramezani Rad M."/>
            <person name="Rasmussen S.W."/>
            <person name="Rose M."/>
            <person name="Rossau R."/>
            <person name="Schaaff-Gerstenschlaeger I."/>
            <person name="Smits P.H.M."/>
            <person name="Scarcez T."/>
            <person name="Soriano N."/>
            <person name="To Van D."/>
            <person name="Tzermia M."/>
            <person name="Van Broekhoven A."/>
            <person name="Vandenbol M."/>
            <person name="Wedler H."/>
            <person name="von Wettstein D."/>
            <person name="Wambutt R."/>
            <person name="Zagulski M."/>
            <person name="Zollner A."/>
            <person name="Karpfinger-Hartl L."/>
        </authorList>
    </citation>
    <scope>NUCLEOTIDE SEQUENCE [LARGE SCALE GENOMIC DNA]</scope>
    <source>
        <strain>ATCC 204508 / S288c</strain>
    </source>
</reference>
<reference key="4">
    <citation type="journal article" date="2014" name="G3 (Bethesda)">
        <title>The reference genome sequence of Saccharomyces cerevisiae: Then and now.</title>
        <authorList>
            <person name="Engel S.R."/>
            <person name="Dietrich F.S."/>
            <person name="Fisk D.G."/>
            <person name="Binkley G."/>
            <person name="Balakrishnan R."/>
            <person name="Costanzo M.C."/>
            <person name="Dwight S.S."/>
            <person name="Hitz B.C."/>
            <person name="Karra K."/>
            <person name="Nash R.S."/>
            <person name="Weng S."/>
            <person name="Wong E.D."/>
            <person name="Lloyd P."/>
            <person name="Skrzypek M.S."/>
            <person name="Miyasato S.R."/>
            <person name="Simison M."/>
            <person name="Cherry J.M."/>
        </authorList>
    </citation>
    <scope>GENOME REANNOTATION</scope>
    <source>
        <strain>ATCC 204508 / S288c</strain>
    </source>
</reference>
<reference key="5">
    <citation type="journal article" date="1998" name="Biochemistry">
        <title>Selective inactivation of parvulin-like peptidyl-prolyl cis/trans isomerases by juglone.</title>
        <authorList>
            <person name="Hennig L."/>
            <person name="Christner C."/>
            <person name="Kipping M."/>
            <person name="Schelbert B."/>
            <person name="Ruecknagel K.P."/>
            <person name="Grabley S."/>
            <person name="Kuellertz G."/>
            <person name="Fischer G."/>
        </authorList>
    </citation>
    <scope>ACTIVITY REGULATION</scope>
</reference>
<reference key="6">
    <citation type="journal article" date="1999" name="J. Biol. Chem.">
        <title>Mutations in a peptidylprolyl-cis/trans-isomerase gene lead to a defect in 3'-end formation of a pre-mRNA in Saccharomyces cerevisiae.</title>
        <authorList>
            <person name="Hani J."/>
            <person name="Schelbert B."/>
            <person name="Bernhardt A."/>
            <person name="Domdey H."/>
            <person name="Fischer G."/>
            <person name="Wiebauer K."/>
            <person name="Rahfeld J.-U."/>
        </authorList>
    </citation>
    <scope>CATALYTIC ACTIVITY</scope>
    <scope>MUTAGENESIS OF GLY-127 AND GLY-162</scope>
</reference>
<reference key="7">
    <citation type="journal article" date="1999" name="J. Biol. Chem.">
        <title>Phospho-carboxyl-terminal domain binding and the role of a prolyl isomerase in pre-mRNA 3'-End formation.</title>
        <authorList>
            <person name="Morris D.P."/>
            <person name="Phatnani H.P."/>
            <person name="Greenleaf A.L."/>
        </authorList>
    </citation>
    <scope>IDENTIFICATION BY MASS SPECTROMETRY</scope>
    <scope>INTERACTION WITH RPB1</scope>
</reference>
<reference key="8">
    <citation type="journal article" date="2000" name="EMBO J.">
        <title>Cyclophilin A and Ess1 interact with and regulate silencing by the Sin3-Rpd3 histone deacetylase.</title>
        <authorList>
            <person name="Arevalo-Rodriguez M."/>
            <person name="Cardenas M.E."/>
            <person name="Wu X."/>
            <person name="Hanes S.D."/>
            <person name="Heitman J."/>
        </authorList>
    </citation>
    <scope>INTERACTION WITH SIN3</scope>
</reference>
<reference key="9">
    <citation type="journal article" date="2003" name="Nature">
        <title>Sequencing and comparison of yeast species to identify genes and regulatory elements.</title>
        <authorList>
            <person name="Kellis M."/>
            <person name="Patterson N."/>
            <person name="Endrizzi M."/>
            <person name="Birren B.W."/>
            <person name="Lander E.S."/>
        </authorList>
    </citation>
    <scope>IDENTIFICATION OF PROBABLE INITIATION SITE</scope>
</reference>
<reference key="10">
    <citation type="journal article" date="2003" name="Nature">
        <title>Global analysis of protein localization in budding yeast.</title>
        <authorList>
            <person name="Huh W.-K."/>
            <person name="Falvo J.V."/>
            <person name="Gerke L.C."/>
            <person name="Carroll A.S."/>
            <person name="Howson R.W."/>
            <person name="Weissman J.S."/>
            <person name="O'Shea E.K."/>
        </authorList>
    </citation>
    <scope>SUBCELLULAR LOCATION [LARGE SCALE ANALYSIS]</scope>
</reference>
<reference key="11">
    <citation type="journal article" date="2003" name="Nature">
        <title>Global analysis of protein expression in yeast.</title>
        <authorList>
            <person name="Ghaemmaghami S."/>
            <person name="Huh W.-K."/>
            <person name="Bower K."/>
            <person name="Howson R.W."/>
            <person name="Belle A."/>
            <person name="Dephoure N."/>
            <person name="O'Shea E.K."/>
            <person name="Weissman J.S."/>
        </authorList>
    </citation>
    <scope>LEVEL OF PROTEIN EXPRESSION [LARGE SCALE ANALYSIS]</scope>
</reference>
<reference key="12">
    <citation type="journal article" date="2005" name="J. Biol. Chem.">
        <title>Vanishingly low levels of Ess1 prolyl-isomerase activity are sufficient for growth in Saccharomyces cerevisiae.</title>
        <authorList>
            <person name="Gemmill T.R."/>
            <person name="Wu X."/>
            <person name="Hanes S.D."/>
        </authorList>
    </citation>
    <scope>MUTAGENESIS OF CYS-120; SER-122 AND HIS-164</scope>
</reference>
<reference key="13">
    <citation type="journal article" date="2008" name="Mol. Cell. Proteomics">
        <title>A multidimensional chromatography technology for in-depth phosphoproteome analysis.</title>
        <authorList>
            <person name="Albuquerque C.P."/>
            <person name="Smolka M.B."/>
            <person name="Payne S.H."/>
            <person name="Bafna V."/>
            <person name="Eng J."/>
            <person name="Zhou H."/>
        </authorList>
    </citation>
    <scope>PHOSPHORYLATION [LARGE SCALE ANALYSIS] AT SER-161</scope>
    <scope>IDENTIFICATION BY MASS SPECTROMETRY [LARGE SCALE ANALYSIS]</scope>
</reference>
<proteinExistence type="evidence at protein level"/>
<organism>
    <name type="scientific">Saccharomyces cerevisiae (strain ATCC 204508 / S288c)</name>
    <name type="common">Baker's yeast</name>
    <dbReference type="NCBI Taxonomy" id="559292"/>
    <lineage>
        <taxon>Eukaryota</taxon>
        <taxon>Fungi</taxon>
        <taxon>Dikarya</taxon>
        <taxon>Ascomycota</taxon>
        <taxon>Saccharomycotina</taxon>
        <taxon>Saccharomycetes</taxon>
        <taxon>Saccharomycetales</taxon>
        <taxon>Saccharomycetaceae</taxon>
        <taxon>Saccharomyces</taxon>
    </lineage>
</organism>
<comment type="function">
    <text>Essential PPIase specific for phosphoserine and phosphothreonine N-terminal to the proline residue. Required for efficient pre-mRNA 3'-end processing and transcription termination, probably by inducing conformational changes by proline-directed isomerization in the C-terminal domain (CTD) of RPB1, thereby altering cofactor binding with the RNA polymerase II transcription complex. Also targets the SIN3-RPD3 histone deacetylase complex (HDAC).</text>
</comment>
<comment type="catalytic activity">
    <reaction evidence="10">
        <text>[protein]-peptidylproline (omega=180) = [protein]-peptidylproline (omega=0)</text>
        <dbReference type="Rhea" id="RHEA:16237"/>
        <dbReference type="Rhea" id="RHEA-COMP:10747"/>
        <dbReference type="Rhea" id="RHEA-COMP:10748"/>
        <dbReference type="ChEBI" id="CHEBI:83833"/>
        <dbReference type="ChEBI" id="CHEBI:83834"/>
        <dbReference type="EC" id="5.2.1.8"/>
    </reaction>
</comment>
<comment type="activity regulation">
    <text evidence="9">Inhibited by 5-hydroxy-1,4-naphthoquinone (juglone), but not by FK506 or cyclosporin A.</text>
</comment>
<comment type="subunit">
    <text evidence="4 5">Interacts with the RNA polymerase II largest subunit (RPB1) and with the SIN1-RDP3 HDAC subunit SIN3.</text>
</comment>
<comment type="interaction">
    <interactant intactId="EBI-6679">
        <id>P22696</id>
    </interactant>
    <interactant intactId="EBI-9475">
        <id>P07278</id>
        <label>BCY1</label>
    </interactant>
    <organismsDiffer>false</organismsDiffer>
    <experiments>2</experiments>
</comment>
<comment type="interaction">
    <interactant intactId="EBI-6679">
        <id>P22696</id>
    </interactant>
    <interactant intactId="EBI-8603">
        <id>P10592</id>
        <label>SSA2</label>
    </interactant>
    <organismsDiffer>false</organismsDiffer>
    <experiments>2</experiments>
</comment>
<comment type="subcellular location">
    <subcellularLocation>
        <location evidence="6">Cytoplasm</location>
    </subcellularLocation>
    <subcellularLocation>
        <location evidence="6">Nucleus</location>
    </subcellularLocation>
</comment>
<comment type="domain">
    <text>The WW domain binds to the phosphorylated tandem 7 residues repeats of RPB1.</text>
</comment>
<comment type="miscellaneous">
    <text evidence="7">Present with 4401 molecules/cell in log phase SD medium.</text>
</comment>
<comment type="similarity">
    <text evidence="11">Belongs to the PpiC/parvulin rotamase family.</text>
</comment>
<comment type="sequence caution" evidence="11">
    <conflict type="erroneous initiation">
        <sequence resource="EMBL-CDS" id="CAA60941"/>
    </conflict>
</comment>
<comment type="sequence caution" evidence="11">
    <conflict type="erroneous initiation">
        <sequence resource="EMBL-CDS" id="CAA89541"/>
    </conflict>
</comment>
<comment type="sequence caution" evidence="11">
    <conflict type="frameshift" ref="1"/>
</comment>
<accession>P22696</accession>
<accession>D6VWJ3</accession>
<name>ESS1_YEAST</name>
<protein>
    <recommendedName>
        <fullName>Peptidyl-prolyl cis-trans isomerase ESS1</fullName>
        <shortName>PPIase ESS1</shortName>
        <ecNumber>5.2.1.8</ecNumber>
    </recommendedName>
    <alternativeName>
        <fullName>Parvulin ESS1</fullName>
    </alternativeName>
    <alternativeName>
        <fullName>Processing/termination factor 1</fullName>
    </alternativeName>
</protein>
<feature type="chain" id="PRO_0000193433" description="Peptidyl-prolyl cis-trans isomerase ESS1">
    <location>
        <begin position="1"/>
        <end position="170"/>
    </location>
</feature>
<feature type="domain" description="WW" evidence="1">
    <location>
        <begin position="9"/>
        <end position="43"/>
    </location>
</feature>
<feature type="domain" description="PpiC" evidence="2">
    <location>
        <begin position="57"/>
        <end position="170"/>
    </location>
</feature>
<feature type="region of interest" description="Disordered" evidence="3">
    <location>
        <begin position="30"/>
        <end position="53"/>
    </location>
</feature>
<feature type="compositionally biased region" description="Basic and acidic residues" evidence="3">
    <location>
        <begin position="32"/>
        <end position="53"/>
    </location>
</feature>
<feature type="modified residue" description="Phosphoserine" evidence="12">
    <location>
        <position position="161"/>
    </location>
</feature>
<feature type="mutagenesis site" description="Abolishes PPIase activity." evidence="8">
    <original>C</original>
    <variation>R</variation>
    <location>
        <position position="120"/>
    </location>
</feature>
<feature type="mutagenesis site" description="Abolishes PPIase activity." evidence="8">
    <original>S</original>
    <variation>P</variation>
    <location>
        <position position="122"/>
    </location>
</feature>
<feature type="mutagenesis site" description="In PTF1-2; decreases the catalytic efficiency 20-fold." evidence="10">
    <original>G</original>
    <variation>D</variation>
    <location>
        <position position="127"/>
    </location>
</feature>
<feature type="mutagenesis site" description="In PTF1-5; decreases the catalytic efficiency 12-fold." evidence="10">
    <original>G</original>
    <variation>S</variation>
    <location>
        <position position="162"/>
    </location>
</feature>
<feature type="mutagenesis site" description="Abolishes PPIase activity." evidence="8">
    <original>H</original>
    <variation>R</variation>
    <location>
        <position position="164"/>
    </location>
</feature>
<feature type="sequence conflict" description="In Ref. 1." evidence="11" ref="1">
    <original>R</original>
    <variation>S</variation>
    <location>
        <position position="8"/>
    </location>
</feature>
<feature type="sequence conflict" description="In Ref. 1." evidence="11" ref="1">
    <original>V</original>
    <variation>A</variation>
    <location>
        <position position="17"/>
    </location>
</feature>
<feature type="sequence conflict" description="In Ref. 1." evidence="11" ref="1">
    <original>D</original>
    <variation>G</variation>
    <location>
        <position position="128"/>
    </location>
</feature>
<feature type="strand" evidence="13">
    <location>
        <begin position="16"/>
        <end position="20"/>
    </location>
</feature>
<feature type="turn" evidence="13">
    <location>
        <begin position="21"/>
        <end position="24"/>
    </location>
</feature>
<feature type="strand" evidence="13">
    <location>
        <begin position="25"/>
        <end position="30"/>
    </location>
</feature>
<feature type="turn" evidence="13">
    <location>
        <begin position="31"/>
        <end position="34"/>
    </location>
</feature>
<feature type="strand" evidence="13">
    <location>
        <begin position="35"/>
        <end position="39"/>
    </location>
</feature>
<feature type="helix" evidence="13">
    <location>
        <begin position="46"/>
        <end position="53"/>
    </location>
</feature>
<feature type="strand" evidence="13">
    <location>
        <begin position="60"/>
        <end position="67"/>
    </location>
</feature>
<feature type="strand" evidence="13">
    <location>
        <begin position="72"/>
        <end position="74"/>
    </location>
</feature>
<feature type="helix" evidence="13">
    <location>
        <begin position="87"/>
        <end position="98"/>
    </location>
</feature>
<feature type="turn" evidence="13">
    <location>
        <begin position="106"/>
        <end position="108"/>
    </location>
</feature>
<feature type="helix" evidence="13">
    <location>
        <begin position="110"/>
        <end position="117"/>
    </location>
</feature>
<feature type="helix" evidence="13">
    <location>
        <begin position="121"/>
        <end position="125"/>
    </location>
</feature>
<feature type="strand" evidence="13">
    <location>
        <begin position="128"/>
        <end position="132"/>
    </location>
</feature>
<feature type="turn" evidence="13">
    <location>
        <begin position="134"/>
        <end position="136"/>
    </location>
</feature>
<feature type="helix" evidence="13">
    <location>
        <begin position="139"/>
        <end position="145"/>
    </location>
</feature>
<feature type="strand" evidence="13">
    <location>
        <begin position="163"/>
        <end position="168"/>
    </location>
</feature>
<gene>
    <name type="primary">ESS1</name>
    <name type="synonym">PIN1</name>
    <name type="synonym">PTF1</name>
    <name type="ordered locus">YJR017C</name>
    <name type="ORF">J1452</name>
</gene>
<dbReference type="EC" id="5.2.1.8"/>
<dbReference type="EMBL" id="X85972">
    <property type="protein sequence ID" value="CAA59961.1"/>
    <property type="molecule type" value="Genomic_DNA"/>
</dbReference>
<dbReference type="EMBL" id="X87611">
    <property type="protein sequence ID" value="CAA60941.1"/>
    <property type="status" value="ALT_INIT"/>
    <property type="molecule type" value="Genomic_DNA"/>
</dbReference>
<dbReference type="EMBL" id="Z49517">
    <property type="protein sequence ID" value="CAA89541.1"/>
    <property type="status" value="ALT_INIT"/>
    <property type="molecule type" value="Genomic_DNA"/>
</dbReference>
<dbReference type="EMBL" id="BK006943">
    <property type="protein sequence ID" value="DAA08809.1"/>
    <property type="molecule type" value="Genomic_DNA"/>
</dbReference>
<dbReference type="PIR" id="S52764">
    <property type="entry name" value="S52764"/>
</dbReference>
<dbReference type="RefSeq" id="NP_012551.2">
    <property type="nucleotide sequence ID" value="NM_001181675.1"/>
</dbReference>
<dbReference type="PDB" id="7KKF">
    <property type="method" value="X-ray"/>
    <property type="resolution" value="2.40 A"/>
    <property type="chains" value="A/B=1-170"/>
</dbReference>
<dbReference type="PDBsum" id="7KKF"/>
<dbReference type="SMR" id="P22696"/>
<dbReference type="BioGRID" id="33773">
    <property type="interactions" value="1014"/>
</dbReference>
<dbReference type="DIP" id="DIP-3856N"/>
<dbReference type="ELM" id="P22696"/>
<dbReference type="FunCoup" id="P22696">
    <property type="interactions" value="1173"/>
</dbReference>
<dbReference type="IntAct" id="P22696">
    <property type="interactions" value="115"/>
</dbReference>
<dbReference type="MINT" id="P22696"/>
<dbReference type="STRING" id="4932.YJR017C"/>
<dbReference type="BindingDB" id="P22696"/>
<dbReference type="iPTMnet" id="P22696"/>
<dbReference type="PaxDb" id="4932-YJR017C"/>
<dbReference type="PeptideAtlas" id="P22696"/>
<dbReference type="TopDownProteomics" id="P22696"/>
<dbReference type="EnsemblFungi" id="YJR017C_mRNA">
    <property type="protein sequence ID" value="YJR017C"/>
    <property type="gene ID" value="YJR017C"/>
</dbReference>
<dbReference type="GeneID" id="853475"/>
<dbReference type="KEGG" id="sce:YJR017C"/>
<dbReference type="AGR" id="SGD:S000003778"/>
<dbReference type="SGD" id="S000003778">
    <property type="gene designation" value="ESS1"/>
</dbReference>
<dbReference type="VEuPathDB" id="FungiDB:YJR017C"/>
<dbReference type="eggNOG" id="KOG3259">
    <property type="taxonomic scope" value="Eukaryota"/>
</dbReference>
<dbReference type="GeneTree" id="ENSGT00640000091578"/>
<dbReference type="HOGENOM" id="CLU_090028_0_1_1"/>
<dbReference type="InParanoid" id="P22696"/>
<dbReference type="OMA" id="WEMRTSR"/>
<dbReference type="OrthoDB" id="2530521at2759"/>
<dbReference type="BioCyc" id="YEAST:YJR017C-MONOMER"/>
<dbReference type="Reactome" id="R-SCE-5668599">
    <property type="pathway name" value="RHO GTPases Activate NADPH Oxidases"/>
</dbReference>
<dbReference type="Reactome" id="R-SCE-6811555">
    <property type="pathway name" value="PI5P Regulates TP53 Acetylation"/>
</dbReference>
<dbReference type="BioGRID-ORCS" id="853475">
    <property type="hits" value="10 hits in 10 CRISPR screens"/>
</dbReference>
<dbReference type="PRO" id="PR:P22696"/>
<dbReference type="Proteomes" id="UP000002311">
    <property type="component" value="Chromosome X"/>
</dbReference>
<dbReference type="RNAct" id="P22696">
    <property type="molecule type" value="protein"/>
</dbReference>
<dbReference type="GO" id="GO:0005829">
    <property type="term" value="C:cytosol"/>
    <property type="evidence" value="ECO:0000318"/>
    <property type="project" value="GO_Central"/>
</dbReference>
<dbReference type="GO" id="GO:0005634">
    <property type="term" value="C:nucleus"/>
    <property type="evidence" value="ECO:0000318"/>
    <property type="project" value="GO_Central"/>
</dbReference>
<dbReference type="GO" id="GO:0003755">
    <property type="term" value="F:peptidyl-prolyl cis-trans isomerase activity"/>
    <property type="evidence" value="ECO:0000314"/>
    <property type="project" value="SGD"/>
</dbReference>
<dbReference type="GO" id="GO:0000993">
    <property type="term" value="F:RNA polymerase II complex binding"/>
    <property type="evidence" value="ECO:0000353"/>
    <property type="project" value="SGD"/>
</dbReference>
<dbReference type="GO" id="GO:0000122">
    <property type="term" value="P:negative regulation of transcription by RNA polymerase II"/>
    <property type="evidence" value="ECO:0000315"/>
    <property type="project" value="SGD"/>
</dbReference>
<dbReference type="GO" id="GO:2000059">
    <property type="term" value="P:negative regulation of ubiquitin-dependent protein catabolic process"/>
    <property type="evidence" value="ECO:0000315"/>
    <property type="project" value="SGD"/>
</dbReference>
<dbReference type="GO" id="GO:2000749">
    <property type="term" value="P:positive regulation of rDNA heterochromatin formation"/>
    <property type="evidence" value="ECO:0000315"/>
    <property type="project" value="SGD"/>
</dbReference>
<dbReference type="GO" id="GO:0045899">
    <property type="term" value="P:positive regulation of RNA polymerase II transcription preinitiation complex assembly"/>
    <property type="evidence" value="ECO:0000316"/>
    <property type="project" value="SGD"/>
</dbReference>
<dbReference type="GO" id="GO:0045944">
    <property type="term" value="P:positive regulation of transcription by RNA polymerase II"/>
    <property type="evidence" value="ECO:0000316"/>
    <property type="project" value="SGD"/>
</dbReference>
<dbReference type="GO" id="GO:0006369">
    <property type="term" value="P:termination of RNA polymerase II transcription"/>
    <property type="evidence" value="ECO:0000315"/>
    <property type="project" value="SGD"/>
</dbReference>
<dbReference type="CDD" id="cd00201">
    <property type="entry name" value="WW"/>
    <property type="match status" value="1"/>
</dbReference>
<dbReference type="FunFam" id="2.20.70.10:FF:000066">
    <property type="entry name" value="Peptidyl-prolyl cis-trans isomerase"/>
    <property type="match status" value="1"/>
</dbReference>
<dbReference type="FunFam" id="3.10.50.40:FF:000026">
    <property type="entry name" value="Peptidyl-prolyl cis-trans isomerase"/>
    <property type="match status" value="1"/>
</dbReference>
<dbReference type="Gene3D" id="2.20.70.10">
    <property type="match status" value="1"/>
</dbReference>
<dbReference type="Gene3D" id="3.10.50.40">
    <property type="match status" value="1"/>
</dbReference>
<dbReference type="InterPro" id="IPR046357">
    <property type="entry name" value="PPIase_dom_sf"/>
</dbReference>
<dbReference type="InterPro" id="IPR051370">
    <property type="entry name" value="PPIase_Pin1"/>
</dbReference>
<dbReference type="InterPro" id="IPR000297">
    <property type="entry name" value="PPIase_PpiC"/>
</dbReference>
<dbReference type="InterPro" id="IPR023058">
    <property type="entry name" value="PPIase_PpiC_CS"/>
</dbReference>
<dbReference type="InterPro" id="IPR001202">
    <property type="entry name" value="WW_dom"/>
</dbReference>
<dbReference type="InterPro" id="IPR036020">
    <property type="entry name" value="WW_dom_sf"/>
</dbReference>
<dbReference type="PANTHER" id="PTHR10657">
    <property type="entry name" value="PEPTIDYL-PROLYL CIS-TRANS ISOMERASE"/>
    <property type="match status" value="1"/>
</dbReference>
<dbReference type="PANTHER" id="PTHR10657:SF4">
    <property type="entry name" value="PEPTIDYL-PROLYL CIS-TRANS ISOMERASE-RELATED"/>
    <property type="match status" value="1"/>
</dbReference>
<dbReference type="Pfam" id="PF00639">
    <property type="entry name" value="Rotamase"/>
    <property type="match status" value="1"/>
</dbReference>
<dbReference type="Pfam" id="PF00397">
    <property type="entry name" value="WW"/>
    <property type="match status" value="1"/>
</dbReference>
<dbReference type="SMART" id="SM00456">
    <property type="entry name" value="WW"/>
    <property type="match status" value="1"/>
</dbReference>
<dbReference type="SUPFAM" id="SSF54534">
    <property type="entry name" value="FKBP-like"/>
    <property type="match status" value="1"/>
</dbReference>
<dbReference type="SUPFAM" id="SSF51045">
    <property type="entry name" value="WW domain"/>
    <property type="match status" value="1"/>
</dbReference>
<dbReference type="PROSITE" id="PS01096">
    <property type="entry name" value="PPIC_PPIASE_1"/>
    <property type="match status" value="1"/>
</dbReference>
<dbReference type="PROSITE" id="PS50198">
    <property type="entry name" value="PPIC_PPIASE_2"/>
    <property type="match status" value="1"/>
</dbReference>
<dbReference type="PROSITE" id="PS01159">
    <property type="entry name" value="WW_DOMAIN_1"/>
    <property type="match status" value="1"/>
</dbReference>
<dbReference type="PROSITE" id="PS50020">
    <property type="entry name" value="WW_DOMAIN_2"/>
    <property type="match status" value="1"/>
</dbReference>
<evidence type="ECO:0000255" key="1">
    <source>
        <dbReference type="PROSITE-ProRule" id="PRU00224"/>
    </source>
</evidence>
<evidence type="ECO:0000255" key="2">
    <source>
        <dbReference type="PROSITE-ProRule" id="PRU00278"/>
    </source>
</evidence>
<evidence type="ECO:0000256" key="3">
    <source>
        <dbReference type="SAM" id="MobiDB-lite"/>
    </source>
</evidence>
<evidence type="ECO:0000269" key="4">
    <source>
    </source>
</evidence>
<evidence type="ECO:0000269" key="5">
    <source>
    </source>
</evidence>
<evidence type="ECO:0000269" key="6">
    <source>
    </source>
</evidence>
<evidence type="ECO:0000269" key="7">
    <source>
    </source>
</evidence>
<evidence type="ECO:0000269" key="8">
    <source>
    </source>
</evidence>
<evidence type="ECO:0000269" key="9">
    <source>
    </source>
</evidence>
<evidence type="ECO:0000269" key="10">
    <source>
    </source>
</evidence>
<evidence type="ECO:0000305" key="11"/>
<evidence type="ECO:0007744" key="12">
    <source>
    </source>
</evidence>
<evidence type="ECO:0007829" key="13">
    <source>
        <dbReference type="PDB" id="7KKF"/>
    </source>
</evidence>